<gene>
    <name evidence="1" type="primary">lipA</name>
    <name type="ordered locus">BCQ_4790</name>
</gene>
<protein>
    <recommendedName>
        <fullName evidence="1">Lipoyl synthase</fullName>
        <ecNumber evidence="1">2.8.1.8</ecNumber>
    </recommendedName>
    <alternativeName>
        <fullName evidence="1">Lip-syn</fullName>
        <shortName evidence="1">LS</shortName>
    </alternativeName>
    <alternativeName>
        <fullName evidence="1">Lipoate synthase</fullName>
    </alternativeName>
    <alternativeName>
        <fullName evidence="1">Lipoic acid synthase</fullName>
    </alternativeName>
    <alternativeName>
        <fullName evidence="1">Sulfur insertion protein LipA</fullName>
    </alternativeName>
</protein>
<keyword id="KW-0004">4Fe-4S</keyword>
<keyword id="KW-0963">Cytoplasm</keyword>
<keyword id="KW-0408">Iron</keyword>
<keyword id="KW-0411">Iron-sulfur</keyword>
<keyword id="KW-0479">Metal-binding</keyword>
<keyword id="KW-0949">S-adenosyl-L-methionine</keyword>
<keyword id="KW-0808">Transferase</keyword>
<proteinExistence type="inferred from homology"/>
<sequence>MTKQTEYKRKPEWLKIKLNTNENYTGLKKMMRSKNLHTVCEEAKCPNIHECWAVRKTATFMILGAVCTRACRFCAVKTGLPTELDLQEPERVADSVVQMGLKHVVITAVARDDLKDGGAAVFAETVRAVRRKNPFTSIEVLPSDMGGVEENLKMLMDAKPDILNHNIETVRRLSDRVRARAKYDRSLEFLRRAKEMQPDIPTKSSIMVGLGETREDLIEAMDDLRANNVDILTLGQYLQPSKKHLPVLKYYPPAEFAELKEIALSKGFSHCEAGPLVRSSYHADEQVRSAKENTAEAK</sequence>
<organism>
    <name type="scientific">Bacillus cereus (strain Q1)</name>
    <dbReference type="NCBI Taxonomy" id="361100"/>
    <lineage>
        <taxon>Bacteria</taxon>
        <taxon>Bacillati</taxon>
        <taxon>Bacillota</taxon>
        <taxon>Bacilli</taxon>
        <taxon>Bacillales</taxon>
        <taxon>Bacillaceae</taxon>
        <taxon>Bacillus</taxon>
        <taxon>Bacillus cereus group</taxon>
    </lineage>
</organism>
<accession>B9J3H2</accession>
<comment type="function">
    <text evidence="1">Catalyzes the radical-mediated insertion of two sulfur atoms into the C-6 and C-8 positions of the octanoyl moiety bound to the lipoyl domains of lipoate-dependent enzymes, thereby converting the octanoylated domains into lipoylated derivatives.</text>
</comment>
<comment type="catalytic activity">
    <reaction evidence="1">
        <text>[[Fe-S] cluster scaffold protein carrying a second [4Fe-4S](2+) cluster] + N(6)-octanoyl-L-lysyl-[protein] + 2 oxidized [2Fe-2S]-[ferredoxin] + 2 S-adenosyl-L-methionine + 4 H(+) = [[Fe-S] cluster scaffold protein] + N(6)-[(R)-dihydrolipoyl]-L-lysyl-[protein] + 4 Fe(3+) + 2 hydrogen sulfide + 2 5'-deoxyadenosine + 2 L-methionine + 2 reduced [2Fe-2S]-[ferredoxin]</text>
        <dbReference type="Rhea" id="RHEA:16585"/>
        <dbReference type="Rhea" id="RHEA-COMP:9928"/>
        <dbReference type="Rhea" id="RHEA-COMP:10000"/>
        <dbReference type="Rhea" id="RHEA-COMP:10001"/>
        <dbReference type="Rhea" id="RHEA-COMP:10475"/>
        <dbReference type="Rhea" id="RHEA-COMP:14568"/>
        <dbReference type="Rhea" id="RHEA-COMP:14569"/>
        <dbReference type="ChEBI" id="CHEBI:15378"/>
        <dbReference type="ChEBI" id="CHEBI:17319"/>
        <dbReference type="ChEBI" id="CHEBI:29034"/>
        <dbReference type="ChEBI" id="CHEBI:29919"/>
        <dbReference type="ChEBI" id="CHEBI:33722"/>
        <dbReference type="ChEBI" id="CHEBI:33737"/>
        <dbReference type="ChEBI" id="CHEBI:33738"/>
        <dbReference type="ChEBI" id="CHEBI:57844"/>
        <dbReference type="ChEBI" id="CHEBI:59789"/>
        <dbReference type="ChEBI" id="CHEBI:78809"/>
        <dbReference type="ChEBI" id="CHEBI:83100"/>
        <dbReference type="EC" id="2.8.1.8"/>
    </reaction>
</comment>
<comment type="cofactor">
    <cofactor evidence="1">
        <name>[4Fe-4S] cluster</name>
        <dbReference type="ChEBI" id="CHEBI:49883"/>
    </cofactor>
    <text evidence="1">Binds 2 [4Fe-4S] clusters per subunit. One cluster is coordinated with 3 cysteines and an exchangeable S-adenosyl-L-methionine.</text>
</comment>
<comment type="pathway">
    <text evidence="1">Protein modification; protein lipoylation via endogenous pathway; protein N(6)-(lipoyl)lysine from octanoyl-[acyl-carrier-protein].</text>
</comment>
<comment type="subcellular location">
    <subcellularLocation>
        <location evidence="1">Cytoplasm</location>
    </subcellularLocation>
</comment>
<comment type="similarity">
    <text evidence="1">Belongs to the radical SAM superfamily. Lipoyl synthase family.</text>
</comment>
<name>LIPA_BACCQ</name>
<reference key="1">
    <citation type="journal article" date="2009" name="J. Bacteriol.">
        <title>Complete genome sequence of the extremophilic Bacillus cereus strain Q1 with industrial applications.</title>
        <authorList>
            <person name="Xiong Z."/>
            <person name="Jiang Y."/>
            <person name="Qi D."/>
            <person name="Lu H."/>
            <person name="Yang F."/>
            <person name="Yang J."/>
            <person name="Chen L."/>
            <person name="Sun L."/>
            <person name="Xu X."/>
            <person name="Xue Y."/>
            <person name="Zhu Y."/>
            <person name="Jin Q."/>
        </authorList>
    </citation>
    <scope>NUCLEOTIDE SEQUENCE [LARGE SCALE GENOMIC DNA]</scope>
    <source>
        <strain>Q1</strain>
    </source>
</reference>
<feature type="chain" id="PRO_1000124621" description="Lipoyl synthase">
    <location>
        <begin position="1"/>
        <end position="298"/>
    </location>
</feature>
<feature type="domain" description="Radical SAM core" evidence="2">
    <location>
        <begin position="53"/>
        <end position="269"/>
    </location>
</feature>
<feature type="binding site" evidence="1">
    <location>
        <position position="40"/>
    </location>
    <ligand>
        <name>[4Fe-4S] cluster</name>
        <dbReference type="ChEBI" id="CHEBI:49883"/>
        <label>1</label>
    </ligand>
</feature>
<feature type="binding site" evidence="1">
    <location>
        <position position="45"/>
    </location>
    <ligand>
        <name>[4Fe-4S] cluster</name>
        <dbReference type="ChEBI" id="CHEBI:49883"/>
        <label>1</label>
    </ligand>
</feature>
<feature type="binding site" evidence="1">
    <location>
        <position position="51"/>
    </location>
    <ligand>
        <name>[4Fe-4S] cluster</name>
        <dbReference type="ChEBI" id="CHEBI:49883"/>
        <label>1</label>
    </ligand>
</feature>
<feature type="binding site" evidence="1">
    <location>
        <position position="67"/>
    </location>
    <ligand>
        <name>[4Fe-4S] cluster</name>
        <dbReference type="ChEBI" id="CHEBI:49883"/>
        <label>2</label>
        <note>4Fe-4S-S-AdoMet</note>
    </ligand>
</feature>
<feature type="binding site" evidence="1">
    <location>
        <position position="71"/>
    </location>
    <ligand>
        <name>[4Fe-4S] cluster</name>
        <dbReference type="ChEBI" id="CHEBI:49883"/>
        <label>2</label>
        <note>4Fe-4S-S-AdoMet</note>
    </ligand>
</feature>
<feature type="binding site" evidence="1">
    <location>
        <position position="74"/>
    </location>
    <ligand>
        <name>[4Fe-4S] cluster</name>
        <dbReference type="ChEBI" id="CHEBI:49883"/>
        <label>2</label>
        <note>4Fe-4S-S-AdoMet</note>
    </ligand>
</feature>
<feature type="binding site" evidence="1">
    <location>
        <position position="280"/>
    </location>
    <ligand>
        <name>[4Fe-4S] cluster</name>
        <dbReference type="ChEBI" id="CHEBI:49883"/>
        <label>1</label>
    </ligand>
</feature>
<dbReference type="EC" id="2.8.1.8" evidence="1"/>
<dbReference type="EMBL" id="CP000227">
    <property type="protein sequence ID" value="ACM15191.1"/>
    <property type="molecule type" value="Genomic_DNA"/>
</dbReference>
<dbReference type="SMR" id="B9J3H2"/>
<dbReference type="KEGG" id="bcq:BCQ_4790"/>
<dbReference type="HOGENOM" id="CLU_033144_2_1_9"/>
<dbReference type="Proteomes" id="UP000000441">
    <property type="component" value="Chromosome"/>
</dbReference>
<dbReference type="GO" id="GO:0005737">
    <property type="term" value="C:cytoplasm"/>
    <property type="evidence" value="ECO:0007669"/>
    <property type="project" value="UniProtKB-SubCell"/>
</dbReference>
<dbReference type="GO" id="GO:0051539">
    <property type="term" value="F:4 iron, 4 sulfur cluster binding"/>
    <property type="evidence" value="ECO:0007669"/>
    <property type="project" value="UniProtKB-UniRule"/>
</dbReference>
<dbReference type="GO" id="GO:0016992">
    <property type="term" value="F:lipoate synthase activity"/>
    <property type="evidence" value="ECO:0007669"/>
    <property type="project" value="UniProtKB-UniRule"/>
</dbReference>
<dbReference type="GO" id="GO:0046872">
    <property type="term" value="F:metal ion binding"/>
    <property type="evidence" value="ECO:0007669"/>
    <property type="project" value="UniProtKB-KW"/>
</dbReference>
<dbReference type="CDD" id="cd01335">
    <property type="entry name" value="Radical_SAM"/>
    <property type="match status" value="1"/>
</dbReference>
<dbReference type="FunFam" id="3.20.20.70:FF:000040">
    <property type="entry name" value="Lipoyl synthase"/>
    <property type="match status" value="1"/>
</dbReference>
<dbReference type="Gene3D" id="3.20.20.70">
    <property type="entry name" value="Aldolase class I"/>
    <property type="match status" value="1"/>
</dbReference>
<dbReference type="HAMAP" id="MF_00206">
    <property type="entry name" value="Lipoyl_synth"/>
    <property type="match status" value="1"/>
</dbReference>
<dbReference type="InterPro" id="IPR013785">
    <property type="entry name" value="Aldolase_TIM"/>
</dbReference>
<dbReference type="InterPro" id="IPR006638">
    <property type="entry name" value="Elp3/MiaA/NifB-like_rSAM"/>
</dbReference>
<dbReference type="InterPro" id="IPR031691">
    <property type="entry name" value="LIAS_N"/>
</dbReference>
<dbReference type="InterPro" id="IPR003698">
    <property type="entry name" value="Lipoyl_synth"/>
</dbReference>
<dbReference type="InterPro" id="IPR007197">
    <property type="entry name" value="rSAM"/>
</dbReference>
<dbReference type="NCBIfam" id="TIGR00510">
    <property type="entry name" value="lipA"/>
    <property type="match status" value="1"/>
</dbReference>
<dbReference type="NCBIfam" id="NF004019">
    <property type="entry name" value="PRK05481.1"/>
    <property type="match status" value="1"/>
</dbReference>
<dbReference type="NCBIfam" id="NF009544">
    <property type="entry name" value="PRK12928.1"/>
    <property type="match status" value="1"/>
</dbReference>
<dbReference type="PANTHER" id="PTHR10949">
    <property type="entry name" value="LIPOYL SYNTHASE"/>
    <property type="match status" value="1"/>
</dbReference>
<dbReference type="PANTHER" id="PTHR10949:SF0">
    <property type="entry name" value="LIPOYL SYNTHASE, MITOCHONDRIAL"/>
    <property type="match status" value="1"/>
</dbReference>
<dbReference type="Pfam" id="PF16881">
    <property type="entry name" value="LIAS_N"/>
    <property type="match status" value="1"/>
</dbReference>
<dbReference type="Pfam" id="PF04055">
    <property type="entry name" value="Radical_SAM"/>
    <property type="match status" value="1"/>
</dbReference>
<dbReference type="PIRSF" id="PIRSF005963">
    <property type="entry name" value="Lipoyl_synth"/>
    <property type="match status" value="1"/>
</dbReference>
<dbReference type="SFLD" id="SFLDF00271">
    <property type="entry name" value="lipoyl_synthase"/>
    <property type="match status" value="1"/>
</dbReference>
<dbReference type="SFLD" id="SFLDS00029">
    <property type="entry name" value="Radical_SAM"/>
    <property type="match status" value="1"/>
</dbReference>
<dbReference type="SMART" id="SM00729">
    <property type="entry name" value="Elp3"/>
    <property type="match status" value="1"/>
</dbReference>
<dbReference type="SUPFAM" id="SSF102114">
    <property type="entry name" value="Radical SAM enzymes"/>
    <property type="match status" value="1"/>
</dbReference>
<dbReference type="PROSITE" id="PS51918">
    <property type="entry name" value="RADICAL_SAM"/>
    <property type="match status" value="1"/>
</dbReference>
<evidence type="ECO:0000255" key="1">
    <source>
        <dbReference type="HAMAP-Rule" id="MF_00206"/>
    </source>
</evidence>
<evidence type="ECO:0000255" key="2">
    <source>
        <dbReference type="PROSITE-ProRule" id="PRU01266"/>
    </source>
</evidence>